<protein>
    <recommendedName>
        <fullName evidence="1">D-tagatose-1,6-bisphosphate aldolase subunit GatZ</fullName>
    </recommendedName>
</protein>
<accession>B7M476</accession>
<feature type="chain" id="PRO_0000372504" description="D-tagatose-1,6-bisphosphate aldolase subunit GatZ">
    <location>
        <begin position="1"/>
        <end position="420"/>
    </location>
</feature>
<organism>
    <name type="scientific">Escherichia coli O8 (strain IAI1)</name>
    <dbReference type="NCBI Taxonomy" id="585034"/>
    <lineage>
        <taxon>Bacteria</taxon>
        <taxon>Pseudomonadati</taxon>
        <taxon>Pseudomonadota</taxon>
        <taxon>Gammaproteobacteria</taxon>
        <taxon>Enterobacterales</taxon>
        <taxon>Enterobacteriaceae</taxon>
        <taxon>Escherichia</taxon>
    </lineage>
</organism>
<name>GATZ_ECO8A</name>
<dbReference type="EMBL" id="CU928160">
    <property type="protein sequence ID" value="CAQ99015.1"/>
    <property type="molecule type" value="Genomic_DNA"/>
</dbReference>
<dbReference type="RefSeq" id="WP_000853863.1">
    <property type="nucleotide sequence ID" value="NC_011741.1"/>
</dbReference>
<dbReference type="SMR" id="B7M476"/>
<dbReference type="KEGG" id="ecr:ECIAI1_2169"/>
<dbReference type="HOGENOM" id="CLU_053334_0_0_6"/>
<dbReference type="UniPathway" id="UPA00704">
    <property type="reaction ID" value="UER00716"/>
</dbReference>
<dbReference type="GO" id="GO:0005886">
    <property type="term" value="C:plasma membrane"/>
    <property type="evidence" value="ECO:0007669"/>
    <property type="project" value="TreeGrafter"/>
</dbReference>
<dbReference type="GO" id="GO:2001059">
    <property type="term" value="P:D-tagatose 6-phosphate catabolic process"/>
    <property type="evidence" value="ECO:0007669"/>
    <property type="project" value="UniProtKB-UniRule"/>
</dbReference>
<dbReference type="GO" id="GO:0019402">
    <property type="term" value="P:galactitol metabolic process"/>
    <property type="evidence" value="ECO:0007669"/>
    <property type="project" value="UniProtKB-KW"/>
</dbReference>
<dbReference type="GO" id="GO:0009401">
    <property type="term" value="P:phosphoenolpyruvate-dependent sugar phosphotransferase system"/>
    <property type="evidence" value="ECO:0007669"/>
    <property type="project" value="TreeGrafter"/>
</dbReference>
<dbReference type="FunFam" id="3.20.20.70:FF:000141">
    <property type="entry name" value="D-tagatose-1,6-bisphosphate aldolase subunit GatZ"/>
    <property type="match status" value="1"/>
</dbReference>
<dbReference type="Gene3D" id="3.20.20.70">
    <property type="entry name" value="Aldolase class I"/>
    <property type="match status" value="1"/>
</dbReference>
<dbReference type="Gene3D" id="1.10.400.20">
    <property type="entry name" value="putative tagatose 6-phosphate kinase domain like"/>
    <property type="match status" value="1"/>
</dbReference>
<dbReference type="HAMAP" id="MF_01296">
    <property type="entry name" value="Tagatose_aldol_GatZ"/>
    <property type="match status" value="1"/>
</dbReference>
<dbReference type="InterPro" id="IPR013785">
    <property type="entry name" value="Aldolase_TIM"/>
</dbReference>
<dbReference type="InterPro" id="IPR012062">
    <property type="entry name" value="GatZ/KbaZ-like"/>
</dbReference>
<dbReference type="InterPro" id="IPR050303">
    <property type="entry name" value="GatZ_KbaZ_carbometab"/>
</dbReference>
<dbReference type="InterPro" id="IPR023436">
    <property type="entry name" value="TagBP_ald_GatZ"/>
</dbReference>
<dbReference type="NCBIfam" id="TIGR02810">
    <property type="entry name" value="agaZ_gatZ"/>
    <property type="match status" value="1"/>
</dbReference>
<dbReference type="NCBIfam" id="NF011626">
    <property type="entry name" value="PRK15052.1"/>
    <property type="match status" value="1"/>
</dbReference>
<dbReference type="PANTHER" id="PTHR32502:SF12">
    <property type="entry name" value="D-TAGATOSE-1,6-BISPHOSPHATE ALDOLASE SUBUNIT GATZ"/>
    <property type="match status" value="1"/>
</dbReference>
<dbReference type="PANTHER" id="PTHR32502">
    <property type="entry name" value="N-ACETYLGALACTOSAMINE PERMEASE II COMPONENT-RELATED"/>
    <property type="match status" value="1"/>
</dbReference>
<dbReference type="Pfam" id="PF08013">
    <property type="entry name" value="GatZ_KbaZ-like"/>
    <property type="match status" value="1"/>
</dbReference>
<dbReference type="PIRSF" id="PIRSF009264">
    <property type="entry name" value="TagBP_ald_AgaZ"/>
    <property type="match status" value="1"/>
</dbReference>
<dbReference type="SUPFAM" id="SSF51569">
    <property type="entry name" value="Aldolase"/>
    <property type="match status" value="1"/>
</dbReference>
<gene>
    <name evidence="1" type="primary">gatZ</name>
    <name type="ordered locus">ECIAI1_2169</name>
</gene>
<proteinExistence type="inferred from homology"/>
<comment type="function">
    <text evidence="1">Component of the tagatose-1,6-bisphosphate aldolase GatYZ that is required for full activity and stability of the Y subunit. Could have a chaperone-like function for the proper and stable folding of GatY. When expressed alone, GatZ does not show any aldolase activity. Is involved in the catabolism of galactitol.</text>
</comment>
<comment type="pathway">
    <text evidence="1">Carbohydrate metabolism; D-tagatose 6-phosphate degradation; D-glyceraldehyde 3-phosphate and glycerone phosphate from D-tagatose 6-phosphate: step 2/2.</text>
</comment>
<comment type="subunit">
    <text evidence="1">Forms a complex with GatY.</text>
</comment>
<comment type="similarity">
    <text evidence="1">Belongs to the GatZ/KbaZ family. GatZ subfamily.</text>
</comment>
<keyword id="KW-0298">Galactitol metabolism</keyword>
<reference key="1">
    <citation type="journal article" date="2009" name="PLoS Genet.">
        <title>Organised genome dynamics in the Escherichia coli species results in highly diverse adaptive paths.</title>
        <authorList>
            <person name="Touchon M."/>
            <person name="Hoede C."/>
            <person name="Tenaillon O."/>
            <person name="Barbe V."/>
            <person name="Baeriswyl S."/>
            <person name="Bidet P."/>
            <person name="Bingen E."/>
            <person name="Bonacorsi S."/>
            <person name="Bouchier C."/>
            <person name="Bouvet O."/>
            <person name="Calteau A."/>
            <person name="Chiapello H."/>
            <person name="Clermont O."/>
            <person name="Cruveiller S."/>
            <person name="Danchin A."/>
            <person name="Diard M."/>
            <person name="Dossat C."/>
            <person name="Karoui M.E."/>
            <person name="Frapy E."/>
            <person name="Garry L."/>
            <person name="Ghigo J.M."/>
            <person name="Gilles A.M."/>
            <person name="Johnson J."/>
            <person name="Le Bouguenec C."/>
            <person name="Lescat M."/>
            <person name="Mangenot S."/>
            <person name="Martinez-Jehanne V."/>
            <person name="Matic I."/>
            <person name="Nassif X."/>
            <person name="Oztas S."/>
            <person name="Petit M.A."/>
            <person name="Pichon C."/>
            <person name="Rouy Z."/>
            <person name="Ruf C.S."/>
            <person name="Schneider D."/>
            <person name="Tourret J."/>
            <person name="Vacherie B."/>
            <person name="Vallenet D."/>
            <person name="Medigue C."/>
            <person name="Rocha E.P.C."/>
            <person name="Denamur E."/>
        </authorList>
    </citation>
    <scope>NUCLEOTIDE SEQUENCE [LARGE SCALE GENOMIC DNA]</scope>
    <source>
        <strain>IAI1</strain>
    </source>
</reference>
<sequence>MKTLIARHKAGEHIGICSVCSAHPLVIEAALAFDRNSTRKVLIEATSNQVNQFGGYTGMTPADFREFVFTIADKVGFARERIILGGDHLGPNCWQQENADAAMEKSVELVKAYVRAGFSKIHLDASMSCAGDPIPLAPETVAERAAVLCFAAESVATDCQREQLSYVIGTEVPVPGGEASAIQSVHITHVEDAANTLRTHQKAFIARGLTEALTRVIAIVVQPGVEFDHSNIIHYQPQEAQALAQWIENTRMVYEAHSTDYQTRTAYWELVRDHFAILKVGPALTFALREAIFALAQIEQELIAPENRSGCLAVIEEVMLDEPQYWKKYYRTGFNDSLLDIRYSLSDRIRYYWPHSRIKNSVETMMVNLEGVDTPLGMISQYLPKQFERIQSGELSAIPHQLIMDKIYDVLRAYRYGCAE</sequence>
<evidence type="ECO:0000255" key="1">
    <source>
        <dbReference type="HAMAP-Rule" id="MF_01296"/>
    </source>
</evidence>